<sequence length="695" mass="77709">MKKLNYLLIVSFIFILNLLISKSQVLIDVTAKCELIDSLSPCKDNLNYTHIYLPTGYTQAAISAQITPLFQQASILPTDCQSNLKNLLCISSYMECNENIPNISPSFPLPSYPCNKYCEKVKDVCSAYMAILGPYVNCSAVQNGNEFFPHTGTDYDLTAYGGSANEEIQCSGPNLASNSTSAPIKFCPSPLIWVDSDTINNKRAYQETTPNCVLPCPTNVYTEKEYKTKFYSEAILFSFSTACSFYLIFTFGVFPNKYTNRNWIIVYLGITAICLAISYAVQEARYGGGDWRCTSDPGRYKSSEDGTCILGGFFFQIGGLGTILFLSLYSFDMFLTMNMMTNKYFIQTSVGMWALIIFYALLPIKHYESSIASAGCWLSNEDNMFWQYFCFYVPSYVATFFLGVFIITSIYKVFKMTVMFKSIKDKRILLLNIRSIIFLIAIMFCVSFSTMYPLYVTYNGDDFSKSVEVYVTCLYANIPNGNEVCPQIVFPQFSLRYMNAITMAIIGIVGLIGLGIDPHILQIYRESIRFKFLLGLVGIQWGTNSPQPLKQGSTTDSSSGSGSGNGSNSGNNRENRKSQRKSRGVSIGMKKINLSASSESSNNLLNQSTPGNLNINESISSIDTSNNNNNNNNNNNNNNNNNNNNNNNNNNNNNNNNNNNNNNNNNNNNNNNYSNNNNNNNNNNNNIERINSDNV</sequence>
<proteinExistence type="inferred from homology"/>
<evidence type="ECO:0000255" key="1"/>
<evidence type="ECO:0000255" key="2">
    <source>
        <dbReference type="PROSITE-ProRule" id="PRU00090"/>
    </source>
</evidence>
<evidence type="ECO:0000256" key="3">
    <source>
        <dbReference type="SAM" id="MobiDB-lite"/>
    </source>
</evidence>
<evidence type="ECO:0000305" key="4"/>
<dbReference type="EMBL" id="AAFI02000023">
    <property type="protein sequence ID" value="EAS66898.1"/>
    <property type="molecule type" value="Genomic_DNA"/>
</dbReference>
<dbReference type="RefSeq" id="XP_001134582.1">
    <property type="nucleotide sequence ID" value="XM_001134582.1"/>
</dbReference>
<dbReference type="GlyCosmos" id="Q1ZXI9">
    <property type="glycosylation" value="3 sites, No reported glycans"/>
</dbReference>
<dbReference type="GlyGen" id="Q1ZXI9">
    <property type="glycosylation" value="3 sites"/>
</dbReference>
<dbReference type="PaxDb" id="44689-DDB0231534"/>
<dbReference type="EnsemblProtists" id="EAS66898">
    <property type="protein sequence ID" value="EAS66898"/>
    <property type="gene ID" value="DDB_G0278289"/>
</dbReference>
<dbReference type="GeneID" id="8621475"/>
<dbReference type="KEGG" id="ddi:DDB_G0278289"/>
<dbReference type="dictyBase" id="DDB_G0278289">
    <property type="gene designation" value="fslO"/>
</dbReference>
<dbReference type="VEuPathDB" id="AmoebaDB:DDB_G0278289"/>
<dbReference type="eggNOG" id="ENOG502RBR8">
    <property type="taxonomic scope" value="Eukaryota"/>
</dbReference>
<dbReference type="HOGENOM" id="CLU_447205_0_0_1"/>
<dbReference type="InParanoid" id="Q1ZXI9"/>
<dbReference type="OMA" id="FTARCCL"/>
<dbReference type="PhylomeDB" id="Q1ZXI9"/>
<dbReference type="PRO" id="PR:Q1ZXI9"/>
<dbReference type="Proteomes" id="UP000002195">
    <property type="component" value="Chromosome 3"/>
</dbReference>
<dbReference type="GO" id="GO:0016020">
    <property type="term" value="C:membrane"/>
    <property type="evidence" value="ECO:0007669"/>
    <property type="project" value="UniProtKB-SubCell"/>
</dbReference>
<dbReference type="CDD" id="cd07066">
    <property type="entry name" value="CRD_FZ"/>
    <property type="match status" value="1"/>
</dbReference>
<dbReference type="Gene3D" id="1.10.2000.10">
    <property type="entry name" value="Frizzled cysteine-rich domain"/>
    <property type="match status" value="1"/>
</dbReference>
<dbReference type="Gene3D" id="1.20.1070.10">
    <property type="entry name" value="Rhodopsin 7-helix transmembrane proteins"/>
    <property type="match status" value="1"/>
</dbReference>
<dbReference type="InterPro" id="IPR020067">
    <property type="entry name" value="Frizzled_dom"/>
</dbReference>
<dbReference type="InterPro" id="IPR036790">
    <property type="entry name" value="Frizzled_dom_sf"/>
</dbReference>
<dbReference type="InterPro" id="IPR050949">
    <property type="entry name" value="GPCR_Fz/Smo-like"/>
</dbReference>
<dbReference type="PANTHER" id="PTHR31787:SF14">
    <property type="entry name" value="FRIZZLED AND SMOOTHENED-LIKE PROTEIN N-RELATED"/>
    <property type="match status" value="1"/>
</dbReference>
<dbReference type="PANTHER" id="PTHR31787">
    <property type="entry name" value="G-PROTEIN-COUPLED RECEPTOR GPCR FAMILY PROTEIN"/>
    <property type="match status" value="1"/>
</dbReference>
<dbReference type="SUPFAM" id="SSF81321">
    <property type="entry name" value="Family A G protein-coupled receptor-like"/>
    <property type="match status" value="1"/>
</dbReference>
<dbReference type="SUPFAM" id="SSF63501">
    <property type="entry name" value="Frizzled cysteine-rich domain"/>
    <property type="match status" value="1"/>
</dbReference>
<dbReference type="PROSITE" id="PS50038">
    <property type="entry name" value="FZ"/>
    <property type="match status" value="1"/>
</dbReference>
<keyword id="KW-0175">Coiled coil</keyword>
<keyword id="KW-1015">Disulfide bond</keyword>
<keyword id="KW-0325">Glycoprotein</keyword>
<keyword id="KW-0472">Membrane</keyword>
<keyword id="KW-0675">Receptor</keyword>
<keyword id="KW-1185">Reference proteome</keyword>
<keyword id="KW-0732">Signal</keyword>
<keyword id="KW-0812">Transmembrane</keyword>
<keyword id="KW-1133">Transmembrane helix</keyword>
<feature type="signal peptide" evidence="1">
    <location>
        <begin position="1"/>
        <end position="23"/>
    </location>
</feature>
<feature type="chain" id="PRO_0000371376" description="Frizzled and smoothened-like protein O">
    <location>
        <begin position="24"/>
        <end position="695"/>
    </location>
</feature>
<feature type="topological domain" description="Extracellular" evidence="1">
    <location>
        <begin position="24"/>
        <end position="233"/>
    </location>
</feature>
<feature type="transmembrane region" description="Helical; Name=1" evidence="1">
    <location>
        <begin position="234"/>
        <end position="254"/>
    </location>
</feature>
<feature type="topological domain" description="Cytoplasmic" evidence="1">
    <location>
        <begin position="255"/>
        <end position="262"/>
    </location>
</feature>
<feature type="transmembrane region" description="Helical; Name=2" evidence="1">
    <location>
        <begin position="263"/>
        <end position="283"/>
    </location>
</feature>
<feature type="topological domain" description="Extracellular" evidence="1">
    <location>
        <begin position="284"/>
        <end position="307"/>
    </location>
</feature>
<feature type="transmembrane region" description="Helical; Name=3" evidence="1">
    <location>
        <begin position="308"/>
        <end position="328"/>
    </location>
</feature>
<feature type="topological domain" description="Cytoplasmic" evidence="1">
    <location>
        <begin position="329"/>
        <end position="343"/>
    </location>
</feature>
<feature type="transmembrane region" description="Helical; Name=4" evidence="1">
    <location>
        <begin position="344"/>
        <end position="364"/>
    </location>
</feature>
<feature type="topological domain" description="Extracellular" evidence="1">
    <location>
        <begin position="365"/>
        <end position="387"/>
    </location>
</feature>
<feature type="transmembrane region" description="Helical; Name=5" evidence="1">
    <location>
        <begin position="388"/>
        <end position="408"/>
    </location>
</feature>
<feature type="topological domain" description="Cytoplasmic" evidence="1">
    <location>
        <begin position="409"/>
        <end position="435"/>
    </location>
</feature>
<feature type="transmembrane region" description="Helical; Name=6" evidence="1">
    <location>
        <begin position="436"/>
        <end position="456"/>
    </location>
</feature>
<feature type="topological domain" description="Extracellular" evidence="1">
    <location>
        <begin position="457"/>
        <end position="500"/>
    </location>
</feature>
<feature type="transmembrane region" description="Helical; Name=7" evidence="1">
    <location>
        <begin position="501"/>
        <end position="521"/>
    </location>
</feature>
<feature type="topological domain" description="Cytoplasmic" evidence="1">
    <location>
        <begin position="522"/>
        <end position="695"/>
    </location>
</feature>
<feature type="domain" description="FZ" evidence="2">
    <location>
        <begin position="28"/>
        <end position="173"/>
    </location>
</feature>
<feature type="region of interest" description="Disordered" evidence="3">
    <location>
        <begin position="545"/>
        <end position="695"/>
    </location>
</feature>
<feature type="coiled-coil region" evidence="1">
    <location>
        <begin position="653"/>
        <end position="691"/>
    </location>
</feature>
<feature type="compositionally biased region" description="Polar residues" evidence="3">
    <location>
        <begin position="545"/>
        <end position="556"/>
    </location>
</feature>
<feature type="compositionally biased region" description="Low complexity" evidence="3">
    <location>
        <begin position="593"/>
        <end position="608"/>
    </location>
</feature>
<feature type="compositionally biased region" description="Polar residues" evidence="3">
    <location>
        <begin position="609"/>
        <end position="625"/>
    </location>
</feature>
<feature type="compositionally biased region" description="Low complexity" evidence="3">
    <location>
        <begin position="626"/>
        <end position="686"/>
    </location>
</feature>
<feature type="glycosylation site" description="N-linked (GlcNAc...) asparagine" evidence="1">
    <location>
        <position position="47"/>
    </location>
</feature>
<feature type="glycosylation site" description="N-linked (GlcNAc...) asparagine" evidence="1">
    <location>
        <position position="137"/>
    </location>
</feature>
<feature type="glycosylation site" description="N-linked (GlcNAc...) asparagine" evidence="1">
    <location>
        <position position="178"/>
    </location>
</feature>
<feature type="disulfide bond" evidence="2">
    <location>
        <begin position="33"/>
        <end position="96"/>
    </location>
</feature>
<feature type="disulfide bond" evidence="2">
    <location>
        <begin position="42"/>
        <end position="89"/>
    </location>
</feature>
<feature type="disulfide bond" evidence="2">
    <location>
        <begin position="80"/>
        <end position="125"/>
    </location>
</feature>
<feature type="disulfide bond" evidence="2">
    <location>
        <begin position="114"/>
        <end position="170"/>
    </location>
</feature>
<feature type="disulfide bond" evidence="2">
    <location>
        <begin position="118"/>
        <end position="138"/>
    </location>
</feature>
<accession>Q1ZXI9</accession>
<organism>
    <name type="scientific">Dictyostelium discoideum</name>
    <name type="common">Social amoeba</name>
    <dbReference type="NCBI Taxonomy" id="44689"/>
    <lineage>
        <taxon>Eukaryota</taxon>
        <taxon>Amoebozoa</taxon>
        <taxon>Evosea</taxon>
        <taxon>Eumycetozoa</taxon>
        <taxon>Dictyostelia</taxon>
        <taxon>Dictyosteliales</taxon>
        <taxon>Dictyosteliaceae</taxon>
        <taxon>Dictyostelium</taxon>
    </lineage>
</organism>
<name>FSLO_DICDI</name>
<gene>
    <name type="primary">fslO</name>
    <name type="ORF">DDB_G0278289</name>
</gene>
<protein>
    <recommendedName>
        <fullName>Frizzled and smoothened-like protein O</fullName>
    </recommendedName>
</protein>
<comment type="subcellular location">
    <subcellularLocation>
        <location evidence="4">Membrane</location>
        <topology evidence="4">Multi-pass membrane protein</topology>
    </subcellularLocation>
</comment>
<comment type="similarity">
    <text evidence="4">Belongs to the G-protein coupled receptor Fz/Smo family.</text>
</comment>
<reference key="1">
    <citation type="journal article" date="2005" name="Nature">
        <title>The genome of the social amoeba Dictyostelium discoideum.</title>
        <authorList>
            <person name="Eichinger L."/>
            <person name="Pachebat J.A."/>
            <person name="Gloeckner G."/>
            <person name="Rajandream M.A."/>
            <person name="Sucgang R."/>
            <person name="Berriman M."/>
            <person name="Song J."/>
            <person name="Olsen R."/>
            <person name="Szafranski K."/>
            <person name="Xu Q."/>
            <person name="Tunggal B."/>
            <person name="Kummerfeld S."/>
            <person name="Madera M."/>
            <person name="Konfortov B.A."/>
            <person name="Rivero F."/>
            <person name="Bankier A.T."/>
            <person name="Lehmann R."/>
            <person name="Hamlin N."/>
            <person name="Davies R."/>
            <person name="Gaudet P."/>
            <person name="Fey P."/>
            <person name="Pilcher K."/>
            <person name="Chen G."/>
            <person name="Saunders D."/>
            <person name="Sodergren E.J."/>
            <person name="Davis P."/>
            <person name="Kerhornou A."/>
            <person name="Nie X."/>
            <person name="Hall N."/>
            <person name="Anjard C."/>
            <person name="Hemphill L."/>
            <person name="Bason N."/>
            <person name="Farbrother P."/>
            <person name="Desany B."/>
            <person name="Just E."/>
            <person name="Morio T."/>
            <person name="Rost R."/>
            <person name="Churcher C.M."/>
            <person name="Cooper J."/>
            <person name="Haydock S."/>
            <person name="van Driessche N."/>
            <person name="Cronin A."/>
            <person name="Goodhead I."/>
            <person name="Muzny D.M."/>
            <person name="Mourier T."/>
            <person name="Pain A."/>
            <person name="Lu M."/>
            <person name="Harper D."/>
            <person name="Lindsay R."/>
            <person name="Hauser H."/>
            <person name="James K.D."/>
            <person name="Quiles M."/>
            <person name="Madan Babu M."/>
            <person name="Saito T."/>
            <person name="Buchrieser C."/>
            <person name="Wardroper A."/>
            <person name="Felder M."/>
            <person name="Thangavelu M."/>
            <person name="Johnson D."/>
            <person name="Knights A."/>
            <person name="Loulseged H."/>
            <person name="Mungall K.L."/>
            <person name="Oliver K."/>
            <person name="Price C."/>
            <person name="Quail M.A."/>
            <person name="Urushihara H."/>
            <person name="Hernandez J."/>
            <person name="Rabbinowitsch E."/>
            <person name="Steffen D."/>
            <person name="Sanders M."/>
            <person name="Ma J."/>
            <person name="Kohara Y."/>
            <person name="Sharp S."/>
            <person name="Simmonds M.N."/>
            <person name="Spiegler S."/>
            <person name="Tivey A."/>
            <person name="Sugano S."/>
            <person name="White B."/>
            <person name="Walker D."/>
            <person name="Woodward J.R."/>
            <person name="Winckler T."/>
            <person name="Tanaka Y."/>
            <person name="Shaulsky G."/>
            <person name="Schleicher M."/>
            <person name="Weinstock G.M."/>
            <person name="Rosenthal A."/>
            <person name="Cox E.C."/>
            <person name="Chisholm R.L."/>
            <person name="Gibbs R.A."/>
            <person name="Loomis W.F."/>
            <person name="Platzer M."/>
            <person name="Kay R.R."/>
            <person name="Williams J.G."/>
            <person name="Dear P.H."/>
            <person name="Noegel A.A."/>
            <person name="Barrell B.G."/>
            <person name="Kuspa A."/>
        </authorList>
    </citation>
    <scope>NUCLEOTIDE SEQUENCE [LARGE SCALE GENOMIC DNA]</scope>
    <source>
        <strain>AX4</strain>
    </source>
</reference>
<reference key="2">
    <citation type="journal article" date="2006" name="Eur. J. Cell Biol.">
        <title>The Dictyostelium repertoire of seven transmembrane domain receptors.</title>
        <authorList>
            <person name="Prabhu Y."/>
            <person name="Eichinger L."/>
        </authorList>
    </citation>
    <scope>NOMENCLATURE</scope>
</reference>